<sequence length="281" mass="30118">MQTALASRGRVGLVPTMGFLHEGHATLIRRARAECDVVVVSIFVNPMQFGPTEDLATYPRDLDRDLALAGAAGADFVFHPEAAAMYPAGFSTRVEVSGVSEPLDGAARPGHFAGVATVVLKLLNIVQPERAYFGEKDWQQLAVVRRLVADLNLRSEIVGVPTVRADEEAAHAGLALSSRNSYLSPEQQRRATVLSRALRAVQAAYAGGERDTGRLRQAGLDVLASEPELALDYLVVVGPDLRDVPQLSDDPLNRVLIAGRLFGVRLIDNMPLSTAPVPAPA</sequence>
<feature type="chain" id="PRO_0000128225" description="Pantothenate synthetase">
    <location>
        <begin position="1"/>
        <end position="281"/>
    </location>
</feature>
<feature type="active site" description="Proton donor" evidence="1">
    <location>
        <position position="24"/>
    </location>
</feature>
<feature type="binding site" evidence="1">
    <location>
        <begin position="17"/>
        <end position="24"/>
    </location>
    <ligand>
        <name>ATP</name>
        <dbReference type="ChEBI" id="CHEBI:30616"/>
    </ligand>
</feature>
<feature type="binding site" evidence="1">
    <location>
        <position position="48"/>
    </location>
    <ligand>
        <name>(R)-pantoate</name>
        <dbReference type="ChEBI" id="CHEBI:15980"/>
    </ligand>
</feature>
<feature type="binding site" evidence="1">
    <location>
        <position position="48"/>
    </location>
    <ligand>
        <name>beta-alanine</name>
        <dbReference type="ChEBI" id="CHEBI:57966"/>
    </ligand>
</feature>
<feature type="binding site" evidence="1">
    <location>
        <begin position="134"/>
        <end position="137"/>
    </location>
    <ligand>
        <name>ATP</name>
        <dbReference type="ChEBI" id="CHEBI:30616"/>
    </ligand>
</feature>
<feature type="binding site" evidence="1">
    <location>
        <position position="140"/>
    </location>
    <ligand>
        <name>(R)-pantoate</name>
        <dbReference type="ChEBI" id="CHEBI:15980"/>
    </ligand>
</feature>
<feature type="binding site" evidence="1">
    <location>
        <position position="163"/>
    </location>
    <ligand>
        <name>ATP</name>
        <dbReference type="ChEBI" id="CHEBI:30616"/>
    </ligand>
</feature>
<feature type="binding site" evidence="1">
    <location>
        <begin position="176"/>
        <end position="179"/>
    </location>
    <ligand>
        <name>ATP</name>
        <dbReference type="ChEBI" id="CHEBI:30616"/>
    </ligand>
</feature>
<evidence type="ECO:0000255" key="1">
    <source>
        <dbReference type="HAMAP-Rule" id="MF_00158"/>
    </source>
</evidence>
<name>PANC_DEIRA</name>
<organism>
    <name type="scientific">Deinococcus radiodurans (strain ATCC 13939 / DSM 20539 / JCM 16871 / CCUG 27074 / LMG 4051 / NBRC 15346 / NCIMB 9279 / VKM B-1422 / R1)</name>
    <dbReference type="NCBI Taxonomy" id="243230"/>
    <lineage>
        <taxon>Bacteria</taxon>
        <taxon>Thermotogati</taxon>
        <taxon>Deinococcota</taxon>
        <taxon>Deinococci</taxon>
        <taxon>Deinococcales</taxon>
        <taxon>Deinococcaceae</taxon>
        <taxon>Deinococcus</taxon>
    </lineage>
</organism>
<protein>
    <recommendedName>
        <fullName evidence="1">Pantothenate synthetase</fullName>
        <shortName evidence="1">PS</shortName>
        <ecNumber evidence="1">6.3.2.1</ecNumber>
    </recommendedName>
    <alternativeName>
        <fullName evidence="1">Pantoate--beta-alanine ligase</fullName>
    </alternativeName>
    <alternativeName>
        <fullName evidence="1">Pantoate-activating enzyme</fullName>
    </alternativeName>
</protein>
<accession>Q9RV66</accession>
<gene>
    <name evidence="1" type="primary">panC</name>
    <name type="ordered locus">DR_1164</name>
</gene>
<proteinExistence type="inferred from homology"/>
<reference key="1">
    <citation type="journal article" date="1999" name="Science">
        <title>Genome sequence of the radioresistant bacterium Deinococcus radiodurans R1.</title>
        <authorList>
            <person name="White O."/>
            <person name="Eisen J.A."/>
            <person name="Heidelberg J.F."/>
            <person name="Hickey E.K."/>
            <person name="Peterson J.D."/>
            <person name="Dodson R.J."/>
            <person name="Haft D.H."/>
            <person name="Gwinn M.L."/>
            <person name="Nelson W.C."/>
            <person name="Richardson D.L."/>
            <person name="Moffat K.S."/>
            <person name="Qin H."/>
            <person name="Jiang L."/>
            <person name="Pamphile W."/>
            <person name="Crosby M."/>
            <person name="Shen M."/>
            <person name="Vamathevan J.J."/>
            <person name="Lam P."/>
            <person name="McDonald L.A."/>
            <person name="Utterback T.R."/>
            <person name="Zalewski C."/>
            <person name="Makarova K.S."/>
            <person name="Aravind L."/>
            <person name="Daly M.J."/>
            <person name="Minton K.W."/>
            <person name="Fleischmann R.D."/>
            <person name="Ketchum K.A."/>
            <person name="Nelson K.E."/>
            <person name="Salzberg S.L."/>
            <person name="Smith H.O."/>
            <person name="Venter J.C."/>
            <person name="Fraser C.M."/>
        </authorList>
    </citation>
    <scope>NUCLEOTIDE SEQUENCE [LARGE SCALE GENOMIC DNA]</scope>
    <source>
        <strain>ATCC 13939 / DSM 20539 / JCM 16871 / CCUG 27074 / LMG 4051 / NBRC 15346 / NCIMB 9279 / VKM B-1422 / R1</strain>
    </source>
</reference>
<keyword id="KW-0067">ATP-binding</keyword>
<keyword id="KW-0963">Cytoplasm</keyword>
<keyword id="KW-0436">Ligase</keyword>
<keyword id="KW-0547">Nucleotide-binding</keyword>
<keyword id="KW-0566">Pantothenate biosynthesis</keyword>
<keyword id="KW-1185">Reference proteome</keyword>
<comment type="function">
    <text evidence="1">Catalyzes the condensation of pantoate with beta-alanine in an ATP-dependent reaction via a pantoyl-adenylate intermediate.</text>
</comment>
<comment type="catalytic activity">
    <reaction evidence="1">
        <text>(R)-pantoate + beta-alanine + ATP = (R)-pantothenate + AMP + diphosphate + H(+)</text>
        <dbReference type="Rhea" id="RHEA:10912"/>
        <dbReference type="ChEBI" id="CHEBI:15378"/>
        <dbReference type="ChEBI" id="CHEBI:15980"/>
        <dbReference type="ChEBI" id="CHEBI:29032"/>
        <dbReference type="ChEBI" id="CHEBI:30616"/>
        <dbReference type="ChEBI" id="CHEBI:33019"/>
        <dbReference type="ChEBI" id="CHEBI:57966"/>
        <dbReference type="ChEBI" id="CHEBI:456215"/>
        <dbReference type="EC" id="6.3.2.1"/>
    </reaction>
</comment>
<comment type="pathway">
    <text evidence="1">Cofactor biosynthesis; (R)-pantothenate biosynthesis; (R)-pantothenate from (R)-pantoate and beta-alanine: step 1/1.</text>
</comment>
<comment type="subunit">
    <text evidence="1">Homodimer.</text>
</comment>
<comment type="subcellular location">
    <subcellularLocation>
        <location evidence="1">Cytoplasm</location>
    </subcellularLocation>
</comment>
<comment type="miscellaneous">
    <text evidence="1">The reaction proceeds by a bi uni uni bi ping pong mechanism.</text>
</comment>
<comment type="similarity">
    <text evidence="1">Belongs to the pantothenate synthetase family.</text>
</comment>
<dbReference type="EC" id="6.3.2.1" evidence="1"/>
<dbReference type="EMBL" id="AE000513">
    <property type="protein sequence ID" value="AAF10737.1"/>
    <property type="molecule type" value="Genomic_DNA"/>
</dbReference>
<dbReference type="PIR" id="G75430">
    <property type="entry name" value="G75430"/>
</dbReference>
<dbReference type="RefSeq" id="NP_294888.1">
    <property type="nucleotide sequence ID" value="NC_001263.1"/>
</dbReference>
<dbReference type="RefSeq" id="WP_010887807.1">
    <property type="nucleotide sequence ID" value="NZ_CP015081.1"/>
</dbReference>
<dbReference type="SMR" id="Q9RV66"/>
<dbReference type="FunCoup" id="Q9RV66">
    <property type="interactions" value="467"/>
</dbReference>
<dbReference type="STRING" id="243230.DR_1164"/>
<dbReference type="PaxDb" id="243230-DR_1164"/>
<dbReference type="EnsemblBacteria" id="AAF10737">
    <property type="protein sequence ID" value="AAF10737"/>
    <property type="gene ID" value="DR_1164"/>
</dbReference>
<dbReference type="KEGG" id="dra:DR_1164"/>
<dbReference type="PATRIC" id="fig|243230.17.peg.1362"/>
<dbReference type="eggNOG" id="COG0414">
    <property type="taxonomic scope" value="Bacteria"/>
</dbReference>
<dbReference type="HOGENOM" id="CLU_047148_0_0_0"/>
<dbReference type="InParanoid" id="Q9RV66"/>
<dbReference type="OrthoDB" id="9773087at2"/>
<dbReference type="UniPathway" id="UPA00028">
    <property type="reaction ID" value="UER00005"/>
</dbReference>
<dbReference type="Proteomes" id="UP000002524">
    <property type="component" value="Chromosome 1"/>
</dbReference>
<dbReference type="GO" id="GO:0005829">
    <property type="term" value="C:cytosol"/>
    <property type="evidence" value="ECO:0000318"/>
    <property type="project" value="GO_Central"/>
</dbReference>
<dbReference type="GO" id="GO:0005524">
    <property type="term" value="F:ATP binding"/>
    <property type="evidence" value="ECO:0007669"/>
    <property type="project" value="UniProtKB-KW"/>
</dbReference>
<dbReference type="GO" id="GO:0004592">
    <property type="term" value="F:pantoate-beta-alanine ligase activity"/>
    <property type="evidence" value="ECO:0000318"/>
    <property type="project" value="GO_Central"/>
</dbReference>
<dbReference type="GO" id="GO:0015940">
    <property type="term" value="P:pantothenate biosynthetic process"/>
    <property type="evidence" value="ECO:0000318"/>
    <property type="project" value="GO_Central"/>
</dbReference>
<dbReference type="CDD" id="cd00560">
    <property type="entry name" value="PanC"/>
    <property type="match status" value="1"/>
</dbReference>
<dbReference type="FunFam" id="3.30.1300.10:FF:000016">
    <property type="match status" value="1"/>
</dbReference>
<dbReference type="FunFam" id="3.40.50.620:FF:000114">
    <property type="entry name" value="Pantothenate synthetase"/>
    <property type="match status" value="1"/>
</dbReference>
<dbReference type="Gene3D" id="3.40.50.620">
    <property type="entry name" value="HUPs"/>
    <property type="match status" value="1"/>
</dbReference>
<dbReference type="Gene3D" id="3.30.1300.10">
    <property type="entry name" value="Pantoate-beta-alanine ligase, C-terminal domain"/>
    <property type="match status" value="1"/>
</dbReference>
<dbReference type="HAMAP" id="MF_00158">
    <property type="entry name" value="PanC"/>
    <property type="match status" value="1"/>
</dbReference>
<dbReference type="InterPro" id="IPR004821">
    <property type="entry name" value="Cyt_trans-like"/>
</dbReference>
<dbReference type="InterPro" id="IPR003721">
    <property type="entry name" value="Pantoate_ligase"/>
</dbReference>
<dbReference type="InterPro" id="IPR042176">
    <property type="entry name" value="Pantoate_ligase_C"/>
</dbReference>
<dbReference type="InterPro" id="IPR014729">
    <property type="entry name" value="Rossmann-like_a/b/a_fold"/>
</dbReference>
<dbReference type="NCBIfam" id="TIGR00125">
    <property type="entry name" value="cyt_tran_rel"/>
    <property type="match status" value="1"/>
</dbReference>
<dbReference type="NCBIfam" id="TIGR00018">
    <property type="entry name" value="panC"/>
    <property type="match status" value="1"/>
</dbReference>
<dbReference type="PANTHER" id="PTHR21299">
    <property type="entry name" value="CYTIDYLATE KINASE/PANTOATE-BETA-ALANINE LIGASE"/>
    <property type="match status" value="1"/>
</dbReference>
<dbReference type="PANTHER" id="PTHR21299:SF1">
    <property type="entry name" value="PANTOATE--BETA-ALANINE LIGASE"/>
    <property type="match status" value="1"/>
</dbReference>
<dbReference type="Pfam" id="PF02569">
    <property type="entry name" value="Pantoate_ligase"/>
    <property type="match status" value="1"/>
</dbReference>
<dbReference type="SUPFAM" id="SSF52374">
    <property type="entry name" value="Nucleotidylyl transferase"/>
    <property type="match status" value="1"/>
</dbReference>